<accession>B0UUF3</accession>
<organism>
    <name type="scientific">Histophilus somni (strain 2336)</name>
    <name type="common">Haemophilus somnus</name>
    <dbReference type="NCBI Taxonomy" id="228400"/>
    <lineage>
        <taxon>Bacteria</taxon>
        <taxon>Pseudomonadati</taxon>
        <taxon>Pseudomonadota</taxon>
        <taxon>Gammaproteobacteria</taxon>
        <taxon>Pasteurellales</taxon>
        <taxon>Pasteurellaceae</taxon>
        <taxon>Histophilus</taxon>
    </lineage>
</organism>
<proteinExistence type="inferred from homology"/>
<name>SUCC_HISS2</name>
<dbReference type="EC" id="6.2.1.5" evidence="1"/>
<dbReference type="EMBL" id="CP000947">
    <property type="protein sequence ID" value="ACA31177.1"/>
    <property type="molecule type" value="Genomic_DNA"/>
</dbReference>
<dbReference type="RefSeq" id="WP_012340577.1">
    <property type="nucleotide sequence ID" value="NC_010519.1"/>
</dbReference>
<dbReference type="SMR" id="B0UUF3"/>
<dbReference type="STRING" id="228400.HSM_1432"/>
<dbReference type="GeneID" id="31487730"/>
<dbReference type="KEGG" id="hsm:HSM_1432"/>
<dbReference type="HOGENOM" id="CLU_037430_0_2_6"/>
<dbReference type="UniPathway" id="UPA00223">
    <property type="reaction ID" value="UER00999"/>
</dbReference>
<dbReference type="GO" id="GO:0005829">
    <property type="term" value="C:cytosol"/>
    <property type="evidence" value="ECO:0007669"/>
    <property type="project" value="TreeGrafter"/>
</dbReference>
<dbReference type="GO" id="GO:0042709">
    <property type="term" value="C:succinate-CoA ligase complex"/>
    <property type="evidence" value="ECO:0007669"/>
    <property type="project" value="TreeGrafter"/>
</dbReference>
<dbReference type="GO" id="GO:0005524">
    <property type="term" value="F:ATP binding"/>
    <property type="evidence" value="ECO:0007669"/>
    <property type="project" value="UniProtKB-UniRule"/>
</dbReference>
<dbReference type="GO" id="GO:0000287">
    <property type="term" value="F:magnesium ion binding"/>
    <property type="evidence" value="ECO:0007669"/>
    <property type="project" value="UniProtKB-UniRule"/>
</dbReference>
<dbReference type="GO" id="GO:0004775">
    <property type="term" value="F:succinate-CoA ligase (ADP-forming) activity"/>
    <property type="evidence" value="ECO:0007669"/>
    <property type="project" value="UniProtKB-UniRule"/>
</dbReference>
<dbReference type="GO" id="GO:0004776">
    <property type="term" value="F:succinate-CoA ligase (GDP-forming) activity"/>
    <property type="evidence" value="ECO:0007669"/>
    <property type="project" value="RHEA"/>
</dbReference>
<dbReference type="GO" id="GO:0006104">
    <property type="term" value="P:succinyl-CoA metabolic process"/>
    <property type="evidence" value="ECO:0007669"/>
    <property type="project" value="TreeGrafter"/>
</dbReference>
<dbReference type="GO" id="GO:0006099">
    <property type="term" value="P:tricarboxylic acid cycle"/>
    <property type="evidence" value="ECO:0007669"/>
    <property type="project" value="UniProtKB-UniRule"/>
</dbReference>
<dbReference type="FunFam" id="3.30.1490.20:FF:000002">
    <property type="entry name" value="Succinate--CoA ligase [ADP-forming] subunit beta"/>
    <property type="match status" value="1"/>
</dbReference>
<dbReference type="FunFam" id="3.30.470.20:FF:000002">
    <property type="entry name" value="Succinate--CoA ligase [ADP-forming] subunit beta"/>
    <property type="match status" value="1"/>
</dbReference>
<dbReference type="FunFam" id="3.40.50.261:FF:000001">
    <property type="entry name" value="Succinate--CoA ligase [ADP-forming] subunit beta"/>
    <property type="match status" value="1"/>
</dbReference>
<dbReference type="Gene3D" id="3.30.1490.20">
    <property type="entry name" value="ATP-grasp fold, A domain"/>
    <property type="match status" value="1"/>
</dbReference>
<dbReference type="Gene3D" id="3.30.470.20">
    <property type="entry name" value="ATP-grasp fold, B domain"/>
    <property type="match status" value="1"/>
</dbReference>
<dbReference type="Gene3D" id="3.40.50.261">
    <property type="entry name" value="Succinyl-CoA synthetase domains"/>
    <property type="match status" value="1"/>
</dbReference>
<dbReference type="HAMAP" id="MF_00558">
    <property type="entry name" value="Succ_CoA_beta"/>
    <property type="match status" value="1"/>
</dbReference>
<dbReference type="InterPro" id="IPR011761">
    <property type="entry name" value="ATP-grasp"/>
</dbReference>
<dbReference type="InterPro" id="IPR013650">
    <property type="entry name" value="ATP-grasp_succ-CoA_synth-type"/>
</dbReference>
<dbReference type="InterPro" id="IPR013815">
    <property type="entry name" value="ATP_grasp_subdomain_1"/>
</dbReference>
<dbReference type="InterPro" id="IPR017866">
    <property type="entry name" value="Succ-CoA_synthase_bsu_CS"/>
</dbReference>
<dbReference type="InterPro" id="IPR005811">
    <property type="entry name" value="SUCC_ACL_C"/>
</dbReference>
<dbReference type="InterPro" id="IPR005809">
    <property type="entry name" value="Succ_CoA_ligase-like_bsu"/>
</dbReference>
<dbReference type="InterPro" id="IPR016102">
    <property type="entry name" value="Succinyl-CoA_synth-like"/>
</dbReference>
<dbReference type="NCBIfam" id="NF001913">
    <property type="entry name" value="PRK00696.1"/>
    <property type="match status" value="1"/>
</dbReference>
<dbReference type="NCBIfam" id="TIGR01016">
    <property type="entry name" value="sucCoAbeta"/>
    <property type="match status" value="1"/>
</dbReference>
<dbReference type="PANTHER" id="PTHR11815:SF10">
    <property type="entry name" value="SUCCINATE--COA LIGASE [GDP-FORMING] SUBUNIT BETA, MITOCHONDRIAL"/>
    <property type="match status" value="1"/>
</dbReference>
<dbReference type="PANTHER" id="PTHR11815">
    <property type="entry name" value="SUCCINYL-COA SYNTHETASE BETA CHAIN"/>
    <property type="match status" value="1"/>
</dbReference>
<dbReference type="Pfam" id="PF08442">
    <property type="entry name" value="ATP-grasp_2"/>
    <property type="match status" value="1"/>
</dbReference>
<dbReference type="Pfam" id="PF00549">
    <property type="entry name" value="Ligase_CoA"/>
    <property type="match status" value="1"/>
</dbReference>
<dbReference type="PIRSF" id="PIRSF001554">
    <property type="entry name" value="SucCS_beta"/>
    <property type="match status" value="1"/>
</dbReference>
<dbReference type="SUPFAM" id="SSF56059">
    <property type="entry name" value="Glutathione synthetase ATP-binding domain-like"/>
    <property type="match status" value="1"/>
</dbReference>
<dbReference type="SUPFAM" id="SSF52210">
    <property type="entry name" value="Succinyl-CoA synthetase domains"/>
    <property type="match status" value="1"/>
</dbReference>
<dbReference type="PROSITE" id="PS50975">
    <property type="entry name" value="ATP_GRASP"/>
    <property type="match status" value="1"/>
</dbReference>
<dbReference type="PROSITE" id="PS01217">
    <property type="entry name" value="SUCCINYL_COA_LIG_3"/>
    <property type="match status" value="1"/>
</dbReference>
<comment type="function">
    <text evidence="1">Succinyl-CoA synthetase functions in the citric acid cycle (TCA), coupling the hydrolysis of succinyl-CoA to the synthesis of either ATP or GTP and thus represents the only step of substrate-level phosphorylation in the TCA. The beta subunit provides nucleotide specificity of the enzyme and binds the substrate succinate, while the binding sites for coenzyme A and phosphate are found in the alpha subunit.</text>
</comment>
<comment type="catalytic activity">
    <reaction evidence="1">
        <text>succinate + ATP + CoA = succinyl-CoA + ADP + phosphate</text>
        <dbReference type="Rhea" id="RHEA:17661"/>
        <dbReference type="ChEBI" id="CHEBI:30031"/>
        <dbReference type="ChEBI" id="CHEBI:30616"/>
        <dbReference type="ChEBI" id="CHEBI:43474"/>
        <dbReference type="ChEBI" id="CHEBI:57287"/>
        <dbReference type="ChEBI" id="CHEBI:57292"/>
        <dbReference type="ChEBI" id="CHEBI:456216"/>
        <dbReference type="EC" id="6.2.1.5"/>
    </reaction>
    <physiologicalReaction direction="right-to-left" evidence="1">
        <dbReference type="Rhea" id="RHEA:17663"/>
    </physiologicalReaction>
</comment>
<comment type="catalytic activity">
    <reaction evidence="1">
        <text>GTP + succinate + CoA = succinyl-CoA + GDP + phosphate</text>
        <dbReference type="Rhea" id="RHEA:22120"/>
        <dbReference type="ChEBI" id="CHEBI:30031"/>
        <dbReference type="ChEBI" id="CHEBI:37565"/>
        <dbReference type="ChEBI" id="CHEBI:43474"/>
        <dbReference type="ChEBI" id="CHEBI:57287"/>
        <dbReference type="ChEBI" id="CHEBI:57292"/>
        <dbReference type="ChEBI" id="CHEBI:58189"/>
    </reaction>
    <physiologicalReaction direction="right-to-left" evidence="1">
        <dbReference type="Rhea" id="RHEA:22122"/>
    </physiologicalReaction>
</comment>
<comment type="cofactor">
    <cofactor evidence="1">
        <name>Mg(2+)</name>
        <dbReference type="ChEBI" id="CHEBI:18420"/>
    </cofactor>
    <text evidence="1">Binds 1 Mg(2+) ion per subunit.</text>
</comment>
<comment type="pathway">
    <text evidence="1">Carbohydrate metabolism; tricarboxylic acid cycle; succinate from succinyl-CoA (ligase route): step 1/1.</text>
</comment>
<comment type="subunit">
    <text evidence="1">Heterotetramer of two alpha and two beta subunits.</text>
</comment>
<comment type="similarity">
    <text evidence="1">Belongs to the succinate/malate CoA ligase beta subunit family.</text>
</comment>
<evidence type="ECO:0000255" key="1">
    <source>
        <dbReference type="HAMAP-Rule" id="MF_00558"/>
    </source>
</evidence>
<gene>
    <name evidence="1" type="primary">sucC</name>
    <name type="ordered locus">HSM_1432</name>
</gene>
<protein>
    <recommendedName>
        <fullName evidence="1">Succinate--CoA ligase [ADP-forming] subunit beta</fullName>
        <ecNumber evidence="1">6.2.1.5</ecNumber>
    </recommendedName>
    <alternativeName>
        <fullName evidence="1">Succinyl-CoA synthetase subunit beta</fullName>
        <shortName evidence="1">SCS-beta</shortName>
    </alternativeName>
</protein>
<sequence>MNLHEYQSKKLFADYGLPVTKGYVCENVEQALSAIEKLSGSQWIAKCQIHAGGRGKAGGVKVVKSAQEVRSFFTKFLGQRLVTVQTNEQGQPIHQIYLEPCAEIQKELYLSAIIDRSSQRIVFMASSEGGMDIEEVAEKTPHLLHRVTIDPLVGAMPYQGRELAFKLGLSGKQIQQFSQIFCQLAKLFVEKDLSLLEINPLVILKNDELFCLDAKVVVDDNALYRHPDLFSMRDLTQEDPREAEAEKWNLNYVALDGNIGCMVNGAGLAMGTMDIIKLHGGRPANFLDVGGGATKERVMEAFKIILTDSAVKAVLVNIFGGIVRCDLIAKGIVSAINEIGVSVPVIVRLEGTNADLGREILAQSNLNLIAVNSLTEAAEQAVNAAKESE</sequence>
<reference key="1">
    <citation type="submission" date="2008-02" db="EMBL/GenBank/DDBJ databases">
        <title>Complete sequence of Haemophilus somnus 2336.</title>
        <authorList>
            <consortium name="US DOE Joint Genome Institute"/>
            <person name="Siddaramappa S."/>
            <person name="Duncan A.J."/>
            <person name="Challacombe J.F."/>
            <person name="Rainey D."/>
            <person name="Gillaspy A.F."/>
            <person name="Carson M."/>
            <person name="Gipson J."/>
            <person name="Gipson M."/>
            <person name="Bruce D."/>
            <person name="Detter J.C."/>
            <person name="Han C.S."/>
            <person name="Land M."/>
            <person name="Tapia R."/>
            <person name="Thompson L.S."/>
            <person name="Orvis J."/>
            <person name="Zaitshik J."/>
            <person name="Barnes G."/>
            <person name="Brettin T.S."/>
            <person name="Dyer D.W."/>
            <person name="Inzana T.J."/>
        </authorList>
    </citation>
    <scope>NUCLEOTIDE SEQUENCE [LARGE SCALE GENOMIC DNA]</scope>
    <source>
        <strain>2336</strain>
    </source>
</reference>
<feature type="chain" id="PRO_1000082101" description="Succinate--CoA ligase [ADP-forming] subunit beta">
    <location>
        <begin position="1"/>
        <end position="389"/>
    </location>
</feature>
<feature type="domain" description="ATP-grasp" evidence="1">
    <location>
        <begin position="9"/>
        <end position="244"/>
    </location>
</feature>
<feature type="binding site" evidence="1">
    <location>
        <position position="46"/>
    </location>
    <ligand>
        <name>ATP</name>
        <dbReference type="ChEBI" id="CHEBI:30616"/>
    </ligand>
</feature>
<feature type="binding site" evidence="1">
    <location>
        <begin position="53"/>
        <end position="55"/>
    </location>
    <ligand>
        <name>ATP</name>
        <dbReference type="ChEBI" id="CHEBI:30616"/>
    </ligand>
</feature>
<feature type="binding site" evidence="1">
    <location>
        <position position="99"/>
    </location>
    <ligand>
        <name>ATP</name>
        <dbReference type="ChEBI" id="CHEBI:30616"/>
    </ligand>
</feature>
<feature type="binding site" evidence="1">
    <location>
        <position position="102"/>
    </location>
    <ligand>
        <name>ATP</name>
        <dbReference type="ChEBI" id="CHEBI:30616"/>
    </ligand>
</feature>
<feature type="binding site" evidence="1">
    <location>
        <position position="107"/>
    </location>
    <ligand>
        <name>ATP</name>
        <dbReference type="ChEBI" id="CHEBI:30616"/>
    </ligand>
</feature>
<feature type="binding site" evidence="1">
    <location>
        <position position="199"/>
    </location>
    <ligand>
        <name>Mg(2+)</name>
        <dbReference type="ChEBI" id="CHEBI:18420"/>
    </ligand>
</feature>
<feature type="binding site" evidence="1">
    <location>
        <position position="213"/>
    </location>
    <ligand>
        <name>Mg(2+)</name>
        <dbReference type="ChEBI" id="CHEBI:18420"/>
    </ligand>
</feature>
<feature type="binding site" evidence="1">
    <location>
        <position position="264"/>
    </location>
    <ligand>
        <name>substrate</name>
        <note>ligand shared with subunit alpha</note>
    </ligand>
</feature>
<feature type="binding site" evidence="1">
    <location>
        <begin position="321"/>
        <end position="323"/>
    </location>
    <ligand>
        <name>substrate</name>
        <note>ligand shared with subunit alpha</note>
    </ligand>
</feature>
<keyword id="KW-0067">ATP-binding</keyword>
<keyword id="KW-0436">Ligase</keyword>
<keyword id="KW-0460">Magnesium</keyword>
<keyword id="KW-0479">Metal-binding</keyword>
<keyword id="KW-0547">Nucleotide-binding</keyword>
<keyword id="KW-0816">Tricarboxylic acid cycle</keyword>